<gene>
    <name evidence="1" type="primary">aspS</name>
    <name type="ordered locus">cbdbA663</name>
</gene>
<proteinExistence type="inferred from homology"/>
<comment type="function">
    <text evidence="1">Aspartyl-tRNA synthetase with relaxed tRNA specificity since it is able to aspartylate not only its cognate tRNA(Asp) but also tRNA(Asn). Reaction proceeds in two steps: L-aspartate is first activated by ATP to form Asp-AMP and then transferred to the acceptor end of tRNA(Asp/Asn).</text>
</comment>
<comment type="catalytic activity">
    <reaction evidence="1">
        <text>tRNA(Asx) + L-aspartate + ATP = L-aspartyl-tRNA(Asx) + AMP + diphosphate</text>
        <dbReference type="Rhea" id="RHEA:18349"/>
        <dbReference type="Rhea" id="RHEA-COMP:9710"/>
        <dbReference type="Rhea" id="RHEA-COMP:9711"/>
        <dbReference type="ChEBI" id="CHEBI:29991"/>
        <dbReference type="ChEBI" id="CHEBI:30616"/>
        <dbReference type="ChEBI" id="CHEBI:33019"/>
        <dbReference type="ChEBI" id="CHEBI:78442"/>
        <dbReference type="ChEBI" id="CHEBI:78516"/>
        <dbReference type="ChEBI" id="CHEBI:456215"/>
        <dbReference type="EC" id="6.1.1.23"/>
    </reaction>
</comment>
<comment type="subunit">
    <text evidence="1">Homodimer.</text>
</comment>
<comment type="subcellular location">
    <subcellularLocation>
        <location evidence="1">Cytoplasm</location>
    </subcellularLocation>
</comment>
<comment type="similarity">
    <text evidence="1">Belongs to the class-II aminoacyl-tRNA synthetase family. Type 1 subfamily.</text>
</comment>
<evidence type="ECO:0000255" key="1">
    <source>
        <dbReference type="HAMAP-Rule" id="MF_00044"/>
    </source>
</evidence>
<protein>
    <recommendedName>
        <fullName evidence="1">Aspartate--tRNA(Asp/Asn) ligase</fullName>
        <ecNumber evidence="1">6.1.1.23</ecNumber>
    </recommendedName>
    <alternativeName>
        <fullName evidence="1">Aspartyl-tRNA synthetase</fullName>
        <shortName evidence="1">AspRS</shortName>
    </alternativeName>
    <alternativeName>
        <fullName evidence="1">Non-discriminating aspartyl-tRNA synthetase</fullName>
        <shortName evidence="1">ND-AspRS</shortName>
    </alternativeName>
</protein>
<reference key="1">
    <citation type="journal article" date="2005" name="Nat. Biotechnol.">
        <title>Genome sequence of the chlorinated compound-respiring bacterium Dehalococcoides species strain CBDB1.</title>
        <authorList>
            <person name="Kube M."/>
            <person name="Beck A."/>
            <person name="Zinder S.H."/>
            <person name="Kuhl H."/>
            <person name="Reinhardt R."/>
            <person name="Adrian L."/>
        </authorList>
    </citation>
    <scope>NUCLEOTIDE SEQUENCE [LARGE SCALE GENOMIC DNA]</scope>
    <source>
        <strain>CBDB1</strain>
    </source>
</reference>
<keyword id="KW-0030">Aminoacyl-tRNA synthetase</keyword>
<keyword id="KW-0067">ATP-binding</keyword>
<keyword id="KW-0963">Cytoplasm</keyword>
<keyword id="KW-0436">Ligase</keyword>
<keyword id="KW-0547">Nucleotide-binding</keyword>
<keyword id="KW-0648">Protein biosynthesis</keyword>
<accession>Q3ZX84</accession>
<dbReference type="EC" id="6.1.1.23" evidence="1"/>
<dbReference type="EMBL" id="AJ965256">
    <property type="protein sequence ID" value="CAI82830.1"/>
    <property type="molecule type" value="Genomic_DNA"/>
</dbReference>
<dbReference type="RefSeq" id="WP_011309181.1">
    <property type="nucleotide sequence ID" value="NC_007356.1"/>
</dbReference>
<dbReference type="SMR" id="Q3ZX84"/>
<dbReference type="KEGG" id="deh:cbdbA663"/>
<dbReference type="HOGENOM" id="CLU_014330_3_2_0"/>
<dbReference type="Proteomes" id="UP000000433">
    <property type="component" value="Chromosome"/>
</dbReference>
<dbReference type="GO" id="GO:0005737">
    <property type="term" value="C:cytoplasm"/>
    <property type="evidence" value="ECO:0007669"/>
    <property type="project" value="UniProtKB-SubCell"/>
</dbReference>
<dbReference type="GO" id="GO:0004815">
    <property type="term" value="F:aspartate-tRNA ligase activity"/>
    <property type="evidence" value="ECO:0007669"/>
    <property type="project" value="UniProtKB-UniRule"/>
</dbReference>
<dbReference type="GO" id="GO:0050560">
    <property type="term" value="F:aspartate-tRNA(Asn) ligase activity"/>
    <property type="evidence" value="ECO:0007669"/>
    <property type="project" value="UniProtKB-EC"/>
</dbReference>
<dbReference type="GO" id="GO:0005524">
    <property type="term" value="F:ATP binding"/>
    <property type="evidence" value="ECO:0007669"/>
    <property type="project" value="UniProtKB-UniRule"/>
</dbReference>
<dbReference type="GO" id="GO:0003676">
    <property type="term" value="F:nucleic acid binding"/>
    <property type="evidence" value="ECO:0007669"/>
    <property type="project" value="InterPro"/>
</dbReference>
<dbReference type="GO" id="GO:0006422">
    <property type="term" value="P:aspartyl-tRNA aminoacylation"/>
    <property type="evidence" value="ECO:0007669"/>
    <property type="project" value="UniProtKB-UniRule"/>
</dbReference>
<dbReference type="CDD" id="cd00777">
    <property type="entry name" value="AspRS_core"/>
    <property type="match status" value="1"/>
</dbReference>
<dbReference type="CDD" id="cd04317">
    <property type="entry name" value="EcAspRS_like_N"/>
    <property type="match status" value="1"/>
</dbReference>
<dbReference type="Gene3D" id="3.30.930.10">
    <property type="entry name" value="Bira Bifunctional Protein, Domain 2"/>
    <property type="match status" value="1"/>
</dbReference>
<dbReference type="Gene3D" id="3.30.1360.30">
    <property type="entry name" value="GAD-like domain"/>
    <property type="match status" value="1"/>
</dbReference>
<dbReference type="Gene3D" id="2.40.50.140">
    <property type="entry name" value="Nucleic acid-binding proteins"/>
    <property type="match status" value="1"/>
</dbReference>
<dbReference type="HAMAP" id="MF_00044">
    <property type="entry name" value="Asp_tRNA_synth_type1"/>
    <property type="match status" value="1"/>
</dbReference>
<dbReference type="InterPro" id="IPR004364">
    <property type="entry name" value="Aa-tRNA-synt_II"/>
</dbReference>
<dbReference type="InterPro" id="IPR006195">
    <property type="entry name" value="aa-tRNA-synth_II"/>
</dbReference>
<dbReference type="InterPro" id="IPR045864">
    <property type="entry name" value="aa-tRNA-synth_II/BPL/LPL"/>
</dbReference>
<dbReference type="InterPro" id="IPR004524">
    <property type="entry name" value="Asp-tRNA-ligase_1"/>
</dbReference>
<dbReference type="InterPro" id="IPR047089">
    <property type="entry name" value="Asp-tRNA-ligase_1_N"/>
</dbReference>
<dbReference type="InterPro" id="IPR002312">
    <property type="entry name" value="Asp/Asn-tRNA-synth_IIb"/>
</dbReference>
<dbReference type="InterPro" id="IPR047090">
    <property type="entry name" value="AspRS_core"/>
</dbReference>
<dbReference type="InterPro" id="IPR004115">
    <property type="entry name" value="GAD-like_sf"/>
</dbReference>
<dbReference type="InterPro" id="IPR029351">
    <property type="entry name" value="GAD_dom"/>
</dbReference>
<dbReference type="InterPro" id="IPR012340">
    <property type="entry name" value="NA-bd_OB-fold"/>
</dbReference>
<dbReference type="InterPro" id="IPR004365">
    <property type="entry name" value="NA-bd_OB_tRNA"/>
</dbReference>
<dbReference type="NCBIfam" id="TIGR00459">
    <property type="entry name" value="aspS_bact"/>
    <property type="match status" value="1"/>
</dbReference>
<dbReference type="NCBIfam" id="NF001750">
    <property type="entry name" value="PRK00476.1"/>
    <property type="match status" value="1"/>
</dbReference>
<dbReference type="PANTHER" id="PTHR22594:SF5">
    <property type="entry name" value="ASPARTATE--TRNA LIGASE, MITOCHONDRIAL"/>
    <property type="match status" value="1"/>
</dbReference>
<dbReference type="PANTHER" id="PTHR22594">
    <property type="entry name" value="ASPARTYL/LYSYL-TRNA SYNTHETASE"/>
    <property type="match status" value="1"/>
</dbReference>
<dbReference type="Pfam" id="PF02938">
    <property type="entry name" value="GAD"/>
    <property type="match status" value="1"/>
</dbReference>
<dbReference type="Pfam" id="PF00152">
    <property type="entry name" value="tRNA-synt_2"/>
    <property type="match status" value="1"/>
</dbReference>
<dbReference type="Pfam" id="PF01336">
    <property type="entry name" value="tRNA_anti-codon"/>
    <property type="match status" value="1"/>
</dbReference>
<dbReference type="PRINTS" id="PR01042">
    <property type="entry name" value="TRNASYNTHASP"/>
</dbReference>
<dbReference type="SUPFAM" id="SSF55681">
    <property type="entry name" value="Class II aaRS and biotin synthetases"/>
    <property type="match status" value="1"/>
</dbReference>
<dbReference type="SUPFAM" id="SSF55261">
    <property type="entry name" value="GAD domain-like"/>
    <property type="match status" value="1"/>
</dbReference>
<dbReference type="SUPFAM" id="SSF50249">
    <property type="entry name" value="Nucleic acid-binding proteins"/>
    <property type="match status" value="1"/>
</dbReference>
<dbReference type="PROSITE" id="PS50862">
    <property type="entry name" value="AA_TRNA_LIGASE_II"/>
    <property type="match status" value="1"/>
</dbReference>
<feature type="chain" id="PRO_0000235524" description="Aspartate--tRNA(Asp/Asn) ligase">
    <location>
        <begin position="1"/>
        <end position="598"/>
    </location>
</feature>
<feature type="region of interest" description="Aspartate" evidence="1">
    <location>
        <begin position="198"/>
        <end position="201"/>
    </location>
</feature>
<feature type="binding site" evidence="1">
    <location>
        <position position="174"/>
    </location>
    <ligand>
        <name>L-aspartate</name>
        <dbReference type="ChEBI" id="CHEBI:29991"/>
    </ligand>
</feature>
<feature type="binding site" evidence="1">
    <location>
        <begin position="220"/>
        <end position="222"/>
    </location>
    <ligand>
        <name>ATP</name>
        <dbReference type="ChEBI" id="CHEBI:30616"/>
    </ligand>
</feature>
<feature type="binding site" evidence="1">
    <location>
        <position position="220"/>
    </location>
    <ligand>
        <name>L-aspartate</name>
        <dbReference type="ChEBI" id="CHEBI:29991"/>
    </ligand>
</feature>
<feature type="binding site" evidence="1">
    <location>
        <position position="229"/>
    </location>
    <ligand>
        <name>ATP</name>
        <dbReference type="ChEBI" id="CHEBI:30616"/>
    </ligand>
</feature>
<feature type="binding site" evidence="1">
    <location>
        <position position="458"/>
    </location>
    <ligand>
        <name>L-aspartate</name>
        <dbReference type="ChEBI" id="CHEBI:29991"/>
    </ligand>
</feature>
<feature type="binding site" evidence="1">
    <location>
        <position position="492"/>
    </location>
    <ligand>
        <name>ATP</name>
        <dbReference type="ChEBI" id="CHEBI:30616"/>
    </ligand>
</feature>
<feature type="binding site" evidence="1">
    <location>
        <position position="499"/>
    </location>
    <ligand>
        <name>L-aspartate</name>
        <dbReference type="ChEBI" id="CHEBI:29991"/>
    </ligand>
</feature>
<feature type="binding site" evidence="1">
    <location>
        <begin position="544"/>
        <end position="547"/>
    </location>
    <ligand>
        <name>ATP</name>
        <dbReference type="ChEBI" id="CHEBI:30616"/>
    </ligand>
</feature>
<feature type="site" description="Important for tRNA non-discrimination" evidence="1">
    <location>
        <position position="30"/>
    </location>
</feature>
<feature type="site" description="Important for tRNA non-discrimination" evidence="1">
    <location>
        <position position="82"/>
    </location>
</feature>
<sequence length="598" mass="66939">MLKTHSCALTQENVGTEVTLAGWVHRRRDHGGVIFIDLRDREGIVQVIFNPEQSAACLDIGKELRSEYVLQVKGVVSHRPAGTENNRMPSGMVEVVAVNAKILNAAKTPPFYINEEVEVDESLRLKYRYLDIRRQGMKNNLIIRHKAVRFMREFLNDQGFIEIETPILIKSTPEGARDYLVPSRLFPGKFFALPQSPQQLKQLLMVAGMEKYYQVARCFRDEDLRADRQPEFTQLDMEMSFVDEEDMMKLMEDLFTGLVANVRPDMKYNKKFPRISFADAMEKYGCDKPDLRFGMELADITDIGASSAFGVFKNVAAQGGAIKAISAPGCGGYNKSQQEELINLAKKYGAAGLVPISLGVENGVLKDLTMEMVKSVAAKYLALEEIKTIAERSGAKPGDLILIVAGARKMVNTVLGEMRNQLAVKLNLCDKNELSFAFVVDFPLFQWDEEGKRWDSVHHPFTAPLESDMPLMDTDPGRVGSRAYDVVCNGYEIAGGSIRIHQADLQRKVFHLLGYNDEQIDERFGHLLEAFEFGAPPHGGVAPGIDRFVMLLAGETSIREVISFPKNQAAQDLLFGAPSVVDDKQIKDLHIRIQAEKE</sequence>
<organism>
    <name type="scientific">Dehalococcoides mccartyi (strain CBDB1)</name>
    <dbReference type="NCBI Taxonomy" id="255470"/>
    <lineage>
        <taxon>Bacteria</taxon>
        <taxon>Bacillati</taxon>
        <taxon>Chloroflexota</taxon>
        <taxon>Dehalococcoidia</taxon>
        <taxon>Dehalococcoidales</taxon>
        <taxon>Dehalococcoidaceae</taxon>
        <taxon>Dehalococcoides</taxon>
    </lineage>
</organism>
<name>SYDND_DEHMC</name>